<dbReference type="EC" id="7.1.1.-" evidence="1"/>
<dbReference type="EMBL" id="CP000551">
    <property type="protein sequence ID" value="ABM69604.1"/>
    <property type="molecule type" value="Genomic_DNA"/>
</dbReference>
<dbReference type="SMR" id="A2BP93"/>
<dbReference type="STRING" id="146891.A9601_03161"/>
<dbReference type="KEGG" id="pmb:A9601_03161"/>
<dbReference type="eggNOG" id="COG0377">
    <property type="taxonomic scope" value="Bacteria"/>
</dbReference>
<dbReference type="HOGENOM" id="CLU_055737_2_0_3"/>
<dbReference type="OrthoDB" id="9786737at2"/>
<dbReference type="Proteomes" id="UP000002590">
    <property type="component" value="Chromosome"/>
</dbReference>
<dbReference type="GO" id="GO:0031676">
    <property type="term" value="C:plasma membrane-derived thylakoid membrane"/>
    <property type="evidence" value="ECO:0007669"/>
    <property type="project" value="UniProtKB-SubCell"/>
</dbReference>
<dbReference type="GO" id="GO:0045271">
    <property type="term" value="C:respiratory chain complex I"/>
    <property type="evidence" value="ECO:0007669"/>
    <property type="project" value="TreeGrafter"/>
</dbReference>
<dbReference type="GO" id="GO:0051539">
    <property type="term" value="F:4 iron, 4 sulfur cluster binding"/>
    <property type="evidence" value="ECO:0007669"/>
    <property type="project" value="UniProtKB-KW"/>
</dbReference>
<dbReference type="GO" id="GO:0005506">
    <property type="term" value="F:iron ion binding"/>
    <property type="evidence" value="ECO:0007669"/>
    <property type="project" value="UniProtKB-UniRule"/>
</dbReference>
<dbReference type="GO" id="GO:0008137">
    <property type="term" value="F:NADH dehydrogenase (ubiquinone) activity"/>
    <property type="evidence" value="ECO:0007669"/>
    <property type="project" value="InterPro"/>
</dbReference>
<dbReference type="GO" id="GO:0048038">
    <property type="term" value="F:quinone binding"/>
    <property type="evidence" value="ECO:0007669"/>
    <property type="project" value="UniProtKB-KW"/>
</dbReference>
<dbReference type="GO" id="GO:0009060">
    <property type="term" value="P:aerobic respiration"/>
    <property type="evidence" value="ECO:0007669"/>
    <property type="project" value="TreeGrafter"/>
</dbReference>
<dbReference type="GO" id="GO:0015990">
    <property type="term" value="P:electron transport coupled proton transport"/>
    <property type="evidence" value="ECO:0007669"/>
    <property type="project" value="TreeGrafter"/>
</dbReference>
<dbReference type="GO" id="GO:0019684">
    <property type="term" value="P:photosynthesis, light reaction"/>
    <property type="evidence" value="ECO:0007669"/>
    <property type="project" value="UniProtKB-UniRule"/>
</dbReference>
<dbReference type="FunFam" id="3.40.50.12280:FF:000003">
    <property type="entry name" value="NAD(P)H-quinone oxidoreductase subunit K, chloroplastic"/>
    <property type="match status" value="1"/>
</dbReference>
<dbReference type="Gene3D" id="3.40.50.12280">
    <property type="match status" value="1"/>
</dbReference>
<dbReference type="HAMAP" id="MF_01356">
    <property type="entry name" value="NDH1_NuoB"/>
    <property type="match status" value="1"/>
</dbReference>
<dbReference type="InterPro" id="IPR006137">
    <property type="entry name" value="NADH_UbQ_OxRdtase-like_20kDa"/>
</dbReference>
<dbReference type="InterPro" id="IPR006138">
    <property type="entry name" value="NADH_UQ_OxRdtase_20Kd_su"/>
</dbReference>
<dbReference type="NCBIfam" id="TIGR01957">
    <property type="entry name" value="nuoB_fam"/>
    <property type="match status" value="1"/>
</dbReference>
<dbReference type="NCBIfam" id="NF005012">
    <property type="entry name" value="PRK06411.1"/>
    <property type="match status" value="1"/>
</dbReference>
<dbReference type="PANTHER" id="PTHR11995">
    <property type="entry name" value="NADH DEHYDROGENASE"/>
    <property type="match status" value="1"/>
</dbReference>
<dbReference type="PANTHER" id="PTHR11995:SF14">
    <property type="entry name" value="NADH DEHYDROGENASE [UBIQUINONE] IRON-SULFUR PROTEIN 7, MITOCHONDRIAL"/>
    <property type="match status" value="1"/>
</dbReference>
<dbReference type="Pfam" id="PF01058">
    <property type="entry name" value="Oxidored_q6"/>
    <property type="match status" value="1"/>
</dbReference>
<dbReference type="SUPFAM" id="SSF56770">
    <property type="entry name" value="HydA/Nqo6-like"/>
    <property type="match status" value="1"/>
</dbReference>
<dbReference type="PROSITE" id="PS01150">
    <property type="entry name" value="COMPLEX1_20K"/>
    <property type="match status" value="1"/>
</dbReference>
<feature type="chain" id="PRO_0000358449" description="NAD(P)H-quinone oxidoreductase subunit K">
    <location>
        <begin position="1"/>
        <end position="244"/>
    </location>
</feature>
<feature type="binding site" evidence="1">
    <location>
        <position position="60"/>
    </location>
    <ligand>
        <name>[4Fe-4S] cluster</name>
        <dbReference type="ChEBI" id="CHEBI:49883"/>
    </ligand>
</feature>
<feature type="binding site" evidence="1">
    <location>
        <position position="61"/>
    </location>
    <ligand>
        <name>[4Fe-4S] cluster</name>
        <dbReference type="ChEBI" id="CHEBI:49883"/>
    </ligand>
</feature>
<feature type="binding site" evidence="1">
    <location>
        <position position="125"/>
    </location>
    <ligand>
        <name>[4Fe-4S] cluster</name>
        <dbReference type="ChEBI" id="CHEBI:49883"/>
    </ligand>
</feature>
<feature type="binding site" evidence="1">
    <location>
        <position position="156"/>
    </location>
    <ligand>
        <name>[4Fe-4S] cluster</name>
        <dbReference type="ChEBI" id="CHEBI:49883"/>
    </ligand>
</feature>
<organism>
    <name type="scientific">Prochlorococcus marinus (strain AS9601)</name>
    <dbReference type="NCBI Taxonomy" id="146891"/>
    <lineage>
        <taxon>Bacteria</taxon>
        <taxon>Bacillati</taxon>
        <taxon>Cyanobacteriota</taxon>
        <taxon>Cyanophyceae</taxon>
        <taxon>Synechococcales</taxon>
        <taxon>Prochlorococcaceae</taxon>
        <taxon>Prochlorococcus</taxon>
    </lineage>
</organism>
<accession>A2BP93</accession>
<keyword id="KW-0004">4Fe-4S</keyword>
<keyword id="KW-0408">Iron</keyword>
<keyword id="KW-0411">Iron-sulfur</keyword>
<keyword id="KW-0472">Membrane</keyword>
<keyword id="KW-0479">Metal-binding</keyword>
<keyword id="KW-0520">NAD</keyword>
<keyword id="KW-0521">NADP</keyword>
<keyword id="KW-0618">Plastoquinone</keyword>
<keyword id="KW-0874">Quinone</keyword>
<keyword id="KW-0793">Thylakoid</keyword>
<keyword id="KW-1278">Translocase</keyword>
<keyword id="KW-0813">Transport</keyword>
<comment type="function">
    <text evidence="1">NDH-1 shuttles electrons from an unknown electron donor, via FMN and iron-sulfur (Fe-S) centers, to quinones in the respiratory and/or the photosynthetic chain. The immediate electron acceptor for the enzyme in this species is believed to be plastoquinone. Couples the redox reaction to proton translocation, and thus conserves the redox energy in a proton gradient. Cyanobacterial NDH-1 also plays a role in inorganic carbon-concentration.</text>
</comment>
<comment type="catalytic activity">
    <reaction evidence="1">
        <text>a plastoquinone + NADH + (n+1) H(+)(in) = a plastoquinol + NAD(+) + n H(+)(out)</text>
        <dbReference type="Rhea" id="RHEA:42608"/>
        <dbReference type="Rhea" id="RHEA-COMP:9561"/>
        <dbReference type="Rhea" id="RHEA-COMP:9562"/>
        <dbReference type="ChEBI" id="CHEBI:15378"/>
        <dbReference type="ChEBI" id="CHEBI:17757"/>
        <dbReference type="ChEBI" id="CHEBI:57540"/>
        <dbReference type="ChEBI" id="CHEBI:57945"/>
        <dbReference type="ChEBI" id="CHEBI:62192"/>
    </reaction>
</comment>
<comment type="catalytic activity">
    <reaction evidence="1">
        <text>a plastoquinone + NADPH + (n+1) H(+)(in) = a plastoquinol + NADP(+) + n H(+)(out)</text>
        <dbReference type="Rhea" id="RHEA:42612"/>
        <dbReference type="Rhea" id="RHEA-COMP:9561"/>
        <dbReference type="Rhea" id="RHEA-COMP:9562"/>
        <dbReference type="ChEBI" id="CHEBI:15378"/>
        <dbReference type="ChEBI" id="CHEBI:17757"/>
        <dbReference type="ChEBI" id="CHEBI:57783"/>
        <dbReference type="ChEBI" id="CHEBI:58349"/>
        <dbReference type="ChEBI" id="CHEBI:62192"/>
    </reaction>
</comment>
<comment type="cofactor">
    <cofactor evidence="1">
        <name>[4Fe-4S] cluster</name>
        <dbReference type="ChEBI" id="CHEBI:49883"/>
    </cofactor>
    <text evidence="1">Binds 1 [4Fe-4S] cluster.</text>
</comment>
<comment type="subunit">
    <text evidence="1">NDH-1 can be composed of about 15 different subunits; different subcomplexes with different compositions have been identified which probably have different functions.</text>
</comment>
<comment type="subcellular location">
    <subcellularLocation>
        <location evidence="1">Cellular thylakoid membrane</location>
        <topology evidence="1">Peripheral membrane protein</topology>
        <orientation evidence="1">Cytoplasmic side</orientation>
    </subcellularLocation>
</comment>
<comment type="similarity">
    <text evidence="1">Belongs to the complex I 20 kDa subunit family.</text>
</comment>
<evidence type="ECO:0000255" key="1">
    <source>
        <dbReference type="HAMAP-Rule" id="MF_01356"/>
    </source>
</evidence>
<proteinExistence type="inferred from homology"/>
<gene>
    <name evidence="1" type="primary">ndhK</name>
    <name type="ordered locus">A9601_03161</name>
</gene>
<reference key="1">
    <citation type="journal article" date="2007" name="PLoS Genet.">
        <title>Patterns and implications of gene gain and loss in the evolution of Prochlorococcus.</title>
        <authorList>
            <person name="Kettler G.C."/>
            <person name="Martiny A.C."/>
            <person name="Huang K."/>
            <person name="Zucker J."/>
            <person name="Coleman M.L."/>
            <person name="Rodrigue S."/>
            <person name="Chen F."/>
            <person name="Lapidus A."/>
            <person name="Ferriera S."/>
            <person name="Johnson J."/>
            <person name="Steglich C."/>
            <person name="Church G.M."/>
            <person name="Richardson P."/>
            <person name="Chisholm S.W."/>
        </authorList>
    </citation>
    <scope>NUCLEOTIDE SEQUENCE [LARGE SCALE GENOMIC DNA]</scope>
    <source>
        <strain>AS9601</strain>
    </source>
</reference>
<protein>
    <recommendedName>
        <fullName evidence="1">NAD(P)H-quinone oxidoreductase subunit K</fullName>
        <ecNumber evidence="1">7.1.1.-</ecNumber>
    </recommendedName>
    <alternativeName>
        <fullName evidence="1">NAD(P)H dehydrogenase I subunit K</fullName>
    </alternativeName>
    <alternativeName>
        <fullName evidence="1">NDH-1 subunit K</fullName>
        <shortName evidence="1">NDH-K</shortName>
    </alternativeName>
</protein>
<name>NDHK_PROMS</name>
<sequence length="244" mass="27087">MKPQLSPKAIREIREGTCNPLGAPQVTTDLSENIILTSLDDLHNWARLSSLWPLLYGTACCFIEFAALIGSRFDFDRFGLVPRSSPRQADLLIVAGTVTMKMAPALVRLYEQMPEPKYVIAMGACTITGGMFSADSTTAVRGVDKLIPVDLYLPGCPPRPEAIFDAVIKLRKKVGNESILERTKTEQTHRYITSDHEMNLVFSENTGEYLNKTSANVIPPSKKEKITELPENTEKTEIINSVED</sequence>